<protein>
    <recommendedName>
        <fullName evidence="1">Adenosylcobinamide-GDP ribazoletransferase</fullName>
        <ecNumber evidence="1">2.7.8.26</ecNumber>
    </recommendedName>
    <alternativeName>
        <fullName evidence="1">Cobalamin synthase</fullName>
    </alternativeName>
    <alternativeName>
        <fullName evidence="1">Cobalamin-5'-phosphate synthase</fullName>
    </alternativeName>
</protein>
<proteinExistence type="inferred from homology"/>
<feature type="chain" id="PRO_0000146919" description="Adenosylcobinamide-GDP ribazoletransferase">
    <location>
        <begin position="1"/>
        <end position="231"/>
    </location>
</feature>
<feature type="transmembrane region" description="Helical" evidence="1">
    <location>
        <begin position="24"/>
        <end position="44"/>
    </location>
</feature>
<feature type="transmembrane region" description="Helical" evidence="1">
    <location>
        <begin position="46"/>
        <end position="66"/>
    </location>
</feature>
<feature type="transmembrane region" description="Helical" evidence="1">
    <location>
        <begin position="96"/>
        <end position="116"/>
    </location>
</feature>
<feature type="transmembrane region" description="Helical" evidence="1">
    <location>
        <begin position="159"/>
        <end position="176"/>
    </location>
</feature>
<feature type="transmembrane region" description="Helical" evidence="1">
    <location>
        <begin position="181"/>
        <end position="198"/>
    </location>
</feature>
<feature type="transmembrane region" description="Helical" evidence="1">
    <location>
        <begin position="209"/>
        <end position="229"/>
    </location>
</feature>
<evidence type="ECO:0000255" key="1">
    <source>
        <dbReference type="HAMAP-Rule" id="MF_00719"/>
    </source>
</evidence>
<keyword id="KW-1003">Cell membrane</keyword>
<keyword id="KW-0169">Cobalamin biosynthesis</keyword>
<keyword id="KW-0460">Magnesium</keyword>
<keyword id="KW-0472">Membrane</keyword>
<keyword id="KW-1185">Reference proteome</keyword>
<keyword id="KW-0808">Transferase</keyword>
<keyword id="KW-0812">Transmembrane</keyword>
<keyword id="KW-1133">Transmembrane helix</keyword>
<sequence length="231" mass="25286">MRNILPFLTRIPVKGDFEKARNELWAFPLVALVSSALPTLILYLGLPLSNLLAVLALYWTIGLLHLDGLADWADGIMAKGDRERKIEVMKDVNTGIAGLFAVVIVLLLQVYSLQLLPFYALFLAELNSKYAMLLALATKRPLGKGLGAYFMEGMNGRQLALGTLLYVLLGLSVVLFEPRALAGILGLLFGVHIIRISLKNFDGLNGDCLGATAEITRAGTLVVMALVWWYL</sequence>
<accession>Q52454</accession>
<gene>
    <name evidence="1" type="primary">cobS</name>
    <name type="ordered locus">TK0857</name>
</gene>
<name>COBS_THEKO</name>
<reference key="1">
    <citation type="journal article" date="1997" name="J. Ferment. Bioeng.">
        <title>Gene cloning and sequence analysis of cobyric acid synthase and cobalamin (5'-phosphate) synthase from hyperthermophilic archaeon Pyrococcus sp. KOD1.</title>
        <authorList>
            <person name="Rahman R."/>
            <person name="Fujiwara S."/>
            <person name="Imanaka T."/>
        </authorList>
    </citation>
    <scope>NUCLEOTIDE SEQUENCE [GENOMIC DNA]</scope>
    <source>
        <strain>ATCC BAA-918 / JCM 12380 / KOD1</strain>
    </source>
</reference>
<reference key="2">
    <citation type="journal article" date="2005" name="Genome Res.">
        <title>Complete genome sequence of the hyperthermophilic archaeon Thermococcus kodakaraensis KOD1 and comparison with Pyrococcus genomes.</title>
        <authorList>
            <person name="Fukui T."/>
            <person name="Atomi H."/>
            <person name="Kanai T."/>
            <person name="Matsumi R."/>
            <person name="Fujiwara S."/>
            <person name="Imanaka T."/>
        </authorList>
    </citation>
    <scope>NUCLEOTIDE SEQUENCE [LARGE SCALE GENOMIC DNA]</scope>
    <source>
        <strain>ATCC BAA-918 / JCM 12380 / KOD1</strain>
    </source>
</reference>
<comment type="function">
    <text evidence="1">Joins adenosylcobinamide-GDP and alpha-ribazole to generate adenosylcobalamin (Ado-cobalamin). Also synthesizes adenosylcobalamin 5'-phosphate from adenosylcobinamide-GDP and alpha-ribazole 5'-phosphate.</text>
</comment>
<comment type="catalytic activity">
    <reaction evidence="1">
        <text>alpha-ribazole + adenosylcob(III)inamide-GDP = adenosylcob(III)alamin + GMP + H(+)</text>
        <dbReference type="Rhea" id="RHEA:16049"/>
        <dbReference type="ChEBI" id="CHEBI:10329"/>
        <dbReference type="ChEBI" id="CHEBI:15378"/>
        <dbReference type="ChEBI" id="CHEBI:18408"/>
        <dbReference type="ChEBI" id="CHEBI:58115"/>
        <dbReference type="ChEBI" id="CHEBI:60487"/>
        <dbReference type="EC" id="2.7.8.26"/>
    </reaction>
</comment>
<comment type="catalytic activity">
    <reaction evidence="1">
        <text>alpha-ribazole 5'-phosphate + adenosylcob(III)inamide-GDP = adenosylcob(III)alamin 5'-phosphate + GMP + H(+)</text>
        <dbReference type="Rhea" id="RHEA:23560"/>
        <dbReference type="ChEBI" id="CHEBI:15378"/>
        <dbReference type="ChEBI" id="CHEBI:57918"/>
        <dbReference type="ChEBI" id="CHEBI:58115"/>
        <dbReference type="ChEBI" id="CHEBI:60487"/>
        <dbReference type="ChEBI" id="CHEBI:60493"/>
        <dbReference type="EC" id="2.7.8.26"/>
    </reaction>
</comment>
<comment type="cofactor">
    <cofactor evidence="1">
        <name>Mg(2+)</name>
        <dbReference type="ChEBI" id="CHEBI:18420"/>
    </cofactor>
</comment>
<comment type="pathway">
    <text evidence="1">Cofactor biosynthesis; adenosylcobalamin biosynthesis; adenosylcobalamin from cob(II)yrinate a,c-diamide: step 7/7.</text>
</comment>
<comment type="subcellular location">
    <subcellularLocation>
        <location evidence="1">Cell membrane</location>
        <topology evidence="1">Multi-pass membrane protein</topology>
    </subcellularLocation>
</comment>
<comment type="similarity">
    <text evidence="1">Belongs to the CobS family.</text>
</comment>
<dbReference type="EC" id="2.7.8.26" evidence="1"/>
<dbReference type="EMBL" id="D83525">
    <property type="protein sequence ID" value="BAA11941.1"/>
    <property type="molecule type" value="Genomic_DNA"/>
</dbReference>
<dbReference type="EMBL" id="AP006878">
    <property type="protein sequence ID" value="BAD85046.1"/>
    <property type="molecule type" value="Genomic_DNA"/>
</dbReference>
<dbReference type="RefSeq" id="WP_011249808.1">
    <property type="nucleotide sequence ID" value="NC_006624.1"/>
</dbReference>
<dbReference type="FunCoup" id="Q52454">
    <property type="interactions" value="53"/>
</dbReference>
<dbReference type="STRING" id="69014.TK0857"/>
<dbReference type="EnsemblBacteria" id="BAD85046">
    <property type="protein sequence ID" value="BAD85046"/>
    <property type="gene ID" value="TK0857"/>
</dbReference>
<dbReference type="GeneID" id="78447372"/>
<dbReference type="KEGG" id="tko:TK0857"/>
<dbReference type="PATRIC" id="fig|69014.16.peg.836"/>
<dbReference type="eggNOG" id="arCOG04338">
    <property type="taxonomic scope" value="Archaea"/>
</dbReference>
<dbReference type="HOGENOM" id="CLU_057426_2_0_2"/>
<dbReference type="InParanoid" id="Q52454"/>
<dbReference type="OrthoDB" id="11748at2157"/>
<dbReference type="PhylomeDB" id="Q52454"/>
<dbReference type="UniPathway" id="UPA00148">
    <property type="reaction ID" value="UER00238"/>
</dbReference>
<dbReference type="Proteomes" id="UP000000536">
    <property type="component" value="Chromosome"/>
</dbReference>
<dbReference type="GO" id="GO:0005886">
    <property type="term" value="C:plasma membrane"/>
    <property type="evidence" value="ECO:0007669"/>
    <property type="project" value="UniProtKB-SubCell"/>
</dbReference>
<dbReference type="GO" id="GO:0051073">
    <property type="term" value="F:adenosylcobinamide-GDP ribazoletransferase activity"/>
    <property type="evidence" value="ECO:0007669"/>
    <property type="project" value="UniProtKB-UniRule"/>
</dbReference>
<dbReference type="GO" id="GO:0008818">
    <property type="term" value="F:cobalamin 5'-phosphate synthase activity"/>
    <property type="evidence" value="ECO:0007669"/>
    <property type="project" value="UniProtKB-UniRule"/>
</dbReference>
<dbReference type="GO" id="GO:0009236">
    <property type="term" value="P:cobalamin biosynthetic process"/>
    <property type="evidence" value="ECO:0000318"/>
    <property type="project" value="GO_Central"/>
</dbReference>
<dbReference type="HAMAP" id="MF_00719">
    <property type="entry name" value="CobS"/>
    <property type="match status" value="1"/>
</dbReference>
<dbReference type="InterPro" id="IPR003805">
    <property type="entry name" value="CobS"/>
</dbReference>
<dbReference type="NCBIfam" id="TIGR00317">
    <property type="entry name" value="cobS"/>
    <property type="match status" value="1"/>
</dbReference>
<dbReference type="PANTHER" id="PTHR34148">
    <property type="entry name" value="ADENOSYLCOBINAMIDE-GDP RIBAZOLETRANSFERASE"/>
    <property type="match status" value="1"/>
</dbReference>
<dbReference type="PANTHER" id="PTHR34148:SF1">
    <property type="entry name" value="ADENOSYLCOBINAMIDE-GDP RIBAZOLETRANSFERASE"/>
    <property type="match status" value="1"/>
</dbReference>
<dbReference type="Pfam" id="PF02654">
    <property type="entry name" value="CobS"/>
    <property type="match status" value="1"/>
</dbReference>
<organism>
    <name type="scientific">Thermococcus kodakarensis (strain ATCC BAA-918 / JCM 12380 / KOD1)</name>
    <name type="common">Pyrococcus kodakaraensis (strain KOD1)</name>
    <dbReference type="NCBI Taxonomy" id="69014"/>
    <lineage>
        <taxon>Archaea</taxon>
        <taxon>Methanobacteriati</taxon>
        <taxon>Methanobacteriota</taxon>
        <taxon>Thermococci</taxon>
        <taxon>Thermococcales</taxon>
        <taxon>Thermococcaceae</taxon>
        <taxon>Thermococcus</taxon>
    </lineage>
</organism>